<organism>
    <name type="scientific">Arabidopsis thaliana</name>
    <name type="common">Mouse-ear cress</name>
    <dbReference type="NCBI Taxonomy" id="3702"/>
    <lineage>
        <taxon>Eukaryota</taxon>
        <taxon>Viridiplantae</taxon>
        <taxon>Streptophyta</taxon>
        <taxon>Embryophyta</taxon>
        <taxon>Tracheophyta</taxon>
        <taxon>Spermatophyta</taxon>
        <taxon>Magnoliopsida</taxon>
        <taxon>eudicotyledons</taxon>
        <taxon>Gunneridae</taxon>
        <taxon>Pentapetalae</taxon>
        <taxon>rosids</taxon>
        <taxon>malvids</taxon>
        <taxon>Brassicales</taxon>
        <taxon>Brassicaceae</taxon>
        <taxon>Camelineae</taxon>
        <taxon>Arabidopsis</taxon>
    </lineage>
</organism>
<gene>
    <name evidence="4" type="primary">BZIP43</name>
    <name type="ordered locus">At5g38800</name>
    <name type="ORF">K15E6.1</name>
</gene>
<keyword id="KW-0238">DNA-binding</keyword>
<keyword id="KW-0539">Nucleus</keyword>
<keyword id="KW-1185">Reference proteome</keyword>
<keyword id="KW-0804">Transcription</keyword>
<keyword id="KW-0805">Transcription regulation</keyword>
<reference key="1">
    <citation type="journal article" date="1998" name="DNA Res.">
        <title>Structural analysis of Arabidopsis thaliana chromosome 5. IV. Sequence features of the regions of 1,456,315 bp covered by nineteen physically assigned P1 and TAC clones.</title>
        <authorList>
            <person name="Sato S."/>
            <person name="Kaneko T."/>
            <person name="Kotani H."/>
            <person name="Nakamura Y."/>
            <person name="Asamizu E."/>
            <person name="Miyajima N."/>
            <person name="Tabata S."/>
        </authorList>
    </citation>
    <scope>NUCLEOTIDE SEQUENCE [LARGE SCALE GENOMIC DNA]</scope>
    <source>
        <strain>cv. Columbia</strain>
    </source>
</reference>
<reference key="2">
    <citation type="journal article" date="2017" name="Plant J.">
        <title>Araport11: a complete reannotation of the Arabidopsis thaliana reference genome.</title>
        <authorList>
            <person name="Cheng C.Y."/>
            <person name="Krishnakumar V."/>
            <person name="Chan A.P."/>
            <person name="Thibaud-Nissen F."/>
            <person name="Schobel S."/>
            <person name="Town C.D."/>
        </authorList>
    </citation>
    <scope>GENOME REANNOTATION</scope>
    <source>
        <strain>cv. Columbia</strain>
    </source>
</reference>
<reference key="3">
    <citation type="journal article" date="2003" name="Science">
        <title>Empirical analysis of transcriptional activity in the Arabidopsis genome.</title>
        <authorList>
            <person name="Yamada K."/>
            <person name="Lim J."/>
            <person name="Dale J.M."/>
            <person name="Chen H."/>
            <person name="Shinn P."/>
            <person name="Palm C.J."/>
            <person name="Southwick A.M."/>
            <person name="Wu H.C."/>
            <person name="Kim C.J."/>
            <person name="Nguyen M."/>
            <person name="Pham P.K."/>
            <person name="Cheuk R.F."/>
            <person name="Karlin-Newmann G."/>
            <person name="Liu S.X."/>
            <person name="Lam B."/>
            <person name="Sakano H."/>
            <person name="Wu T."/>
            <person name="Yu G."/>
            <person name="Miranda M."/>
            <person name="Quach H.L."/>
            <person name="Tripp M."/>
            <person name="Chang C.H."/>
            <person name="Lee J.M."/>
            <person name="Toriumi M.J."/>
            <person name="Chan M.M."/>
            <person name="Tang C.C."/>
            <person name="Onodera C.S."/>
            <person name="Deng J.M."/>
            <person name="Akiyama K."/>
            <person name="Ansari Y."/>
            <person name="Arakawa T."/>
            <person name="Banh J."/>
            <person name="Banno F."/>
            <person name="Bowser L."/>
            <person name="Brooks S.Y."/>
            <person name="Carninci P."/>
            <person name="Chao Q."/>
            <person name="Choy N."/>
            <person name="Enju A."/>
            <person name="Goldsmith A.D."/>
            <person name="Gurjal M."/>
            <person name="Hansen N.F."/>
            <person name="Hayashizaki Y."/>
            <person name="Johnson-Hopson C."/>
            <person name="Hsuan V.W."/>
            <person name="Iida K."/>
            <person name="Karnes M."/>
            <person name="Khan S."/>
            <person name="Koesema E."/>
            <person name="Ishida J."/>
            <person name="Jiang P.X."/>
            <person name="Jones T."/>
            <person name="Kawai J."/>
            <person name="Kamiya A."/>
            <person name="Meyers C."/>
            <person name="Nakajima M."/>
            <person name="Narusaka M."/>
            <person name="Seki M."/>
            <person name="Sakurai T."/>
            <person name="Satou M."/>
            <person name="Tamse R."/>
            <person name="Vaysberg M."/>
            <person name="Wallender E.K."/>
            <person name="Wong C."/>
            <person name="Yamamura Y."/>
            <person name="Yuan S."/>
            <person name="Shinozaki K."/>
            <person name="Davis R.W."/>
            <person name="Theologis A."/>
            <person name="Ecker J.R."/>
        </authorList>
    </citation>
    <scope>NUCLEOTIDE SEQUENCE [LARGE SCALE MRNA] OF 14-165</scope>
    <source>
        <strain>cv. Columbia</strain>
    </source>
</reference>
<reference key="4">
    <citation type="journal article" date="2002" name="Trends Plant Sci.">
        <title>bZIP transcription factors in Arabidopsis.</title>
        <authorList>
            <person name="Jakoby M."/>
            <person name="Weisshaar B."/>
            <person name="Droege-Laser W."/>
            <person name="Vicente-Carbajosa J."/>
            <person name="Tiedemann J."/>
            <person name="Kroj T."/>
            <person name="Parcy F."/>
        </authorList>
    </citation>
    <scope>GENE FAMILY</scope>
    <scope>NOMENCLATURE</scope>
</reference>
<reference key="5">
    <citation type="journal article" date="2007" name="Biochem. Biophys. Res. Commun.">
        <title>A conserved proline residue in the leucine zipper region of AtbZIP34 and AtbZIP61 in Arabidopsis thaliana interferes with the formation of homodimer.</title>
        <authorList>
            <person name="Shen H."/>
            <person name="Cao K."/>
            <person name="Wang X."/>
        </authorList>
    </citation>
    <scope>INTERACTION WITH BZIP34 AND BZIP61</scope>
</reference>
<reference key="6">
    <citation type="journal article" date="2016" name="J. Plant Physiol.">
        <title>Stress-related function of bHLH109 in somatic embryo induction in Arabidopsis.</title>
        <authorList>
            <person name="Nowak K."/>
            <person name="Gaj M.D."/>
        </authorList>
    </citation>
    <scope>FUNCTION</scope>
</reference>
<evidence type="ECO:0000255" key="1">
    <source>
        <dbReference type="PROSITE-ProRule" id="PRU00978"/>
    </source>
</evidence>
<evidence type="ECO:0000269" key="2">
    <source>
    </source>
</evidence>
<evidence type="ECO:0000269" key="3">
    <source>
    </source>
</evidence>
<evidence type="ECO:0000303" key="4">
    <source>
    </source>
</evidence>
<protein>
    <recommendedName>
        <fullName evidence="4">Basic leucine zipper 43</fullName>
        <shortName evidence="4">AtbZIP43</shortName>
        <shortName evidence="4">bZIP protein 43</shortName>
    </recommendedName>
</protein>
<feature type="chain" id="PRO_0000430354" description="Basic leucine zipper 43">
    <location>
        <begin position="1"/>
        <end position="165"/>
    </location>
</feature>
<feature type="domain" description="bZIP" evidence="1">
    <location>
        <begin position="70"/>
        <end position="133"/>
    </location>
</feature>
<feature type="region of interest" description="Basic motif" evidence="1">
    <location>
        <begin position="72"/>
        <end position="93"/>
    </location>
</feature>
<feature type="region of interest" description="Leucine-zipper" evidence="1">
    <location>
        <begin position="98"/>
        <end position="112"/>
    </location>
</feature>
<name>BZP43_ARATH</name>
<dbReference type="EMBL" id="AB009048">
    <property type="protein sequence ID" value="BAB08636.1"/>
    <property type="molecule type" value="Genomic_DNA"/>
</dbReference>
<dbReference type="EMBL" id="CP002688">
    <property type="protein sequence ID" value="AED94361.1"/>
    <property type="molecule type" value="Genomic_DNA"/>
</dbReference>
<dbReference type="EMBL" id="BT002834">
    <property type="protein sequence ID" value="AAO22653.1"/>
    <property type="molecule type" value="mRNA"/>
</dbReference>
<dbReference type="RefSeq" id="NP_198696.1">
    <property type="nucleotide sequence ID" value="NM_123241.3"/>
</dbReference>
<dbReference type="SMR" id="Q9FMC2"/>
<dbReference type="BioGRID" id="19122">
    <property type="interactions" value="43"/>
</dbReference>
<dbReference type="FunCoup" id="Q9FMC2">
    <property type="interactions" value="83"/>
</dbReference>
<dbReference type="IntAct" id="Q9FMC2">
    <property type="interactions" value="43"/>
</dbReference>
<dbReference type="STRING" id="3702.Q9FMC2"/>
<dbReference type="PaxDb" id="3702-AT5G38800.1"/>
<dbReference type="EnsemblPlants" id="AT5G38800.1">
    <property type="protein sequence ID" value="AT5G38800.1"/>
    <property type="gene ID" value="AT5G38800"/>
</dbReference>
<dbReference type="GeneID" id="833871"/>
<dbReference type="Gramene" id="AT5G38800.1">
    <property type="protein sequence ID" value="AT5G38800.1"/>
    <property type="gene ID" value="AT5G38800"/>
</dbReference>
<dbReference type="KEGG" id="ath:AT5G38800"/>
<dbReference type="Araport" id="AT5G38800"/>
<dbReference type="TAIR" id="AT5G38800">
    <property type="gene designation" value="BZIP43"/>
</dbReference>
<dbReference type="eggNOG" id="ENOG502RY8E">
    <property type="taxonomic scope" value="Eukaryota"/>
</dbReference>
<dbReference type="HOGENOM" id="CLU_079478_3_0_1"/>
<dbReference type="InParanoid" id="Q9FMC2"/>
<dbReference type="OMA" id="TNIFSLH"/>
<dbReference type="PhylomeDB" id="Q9FMC2"/>
<dbReference type="PRO" id="PR:Q9FMC2"/>
<dbReference type="Proteomes" id="UP000006548">
    <property type="component" value="Chromosome 5"/>
</dbReference>
<dbReference type="ExpressionAtlas" id="Q9FMC2">
    <property type="expression patterns" value="baseline and differential"/>
</dbReference>
<dbReference type="GO" id="GO:0005634">
    <property type="term" value="C:nucleus"/>
    <property type="evidence" value="ECO:0007669"/>
    <property type="project" value="UniProtKB-SubCell"/>
</dbReference>
<dbReference type="GO" id="GO:0003677">
    <property type="term" value="F:DNA binding"/>
    <property type="evidence" value="ECO:0007669"/>
    <property type="project" value="UniProtKB-KW"/>
</dbReference>
<dbReference type="GO" id="GO:0003700">
    <property type="term" value="F:DNA-binding transcription factor activity"/>
    <property type="evidence" value="ECO:0000250"/>
    <property type="project" value="TAIR"/>
</dbReference>
<dbReference type="CDD" id="cd14702">
    <property type="entry name" value="bZIP_plant_GBF1"/>
    <property type="match status" value="1"/>
</dbReference>
<dbReference type="FunFam" id="1.20.5.170:FF:000020">
    <property type="entry name" value="BZIP transcription factor"/>
    <property type="match status" value="1"/>
</dbReference>
<dbReference type="Gene3D" id="1.20.5.170">
    <property type="match status" value="1"/>
</dbReference>
<dbReference type="InterPro" id="IPR044521">
    <property type="entry name" value="AtbZIP8/43"/>
</dbReference>
<dbReference type="InterPro" id="IPR004827">
    <property type="entry name" value="bZIP"/>
</dbReference>
<dbReference type="InterPro" id="IPR045314">
    <property type="entry name" value="bZIP_plant_GBF1"/>
</dbReference>
<dbReference type="InterPro" id="IPR046347">
    <property type="entry name" value="bZIP_sf"/>
</dbReference>
<dbReference type="PANTHER" id="PTHR46324">
    <property type="entry name" value="BASIC LEUCINE ZIPPER 43-RELATED"/>
    <property type="match status" value="1"/>
</dbReference>
<dbReference type="PANTHER" id="PTHR46324:SF3">
    <property type="entry name" value="BASIC LEUCINE ZIPPER 43-RELATED"/>
    <property type="match status" value="1"/>
</dbReference>
<dbReference type="Pfam" id="PF00170">
    <property type="entry name" value="bZIP_1"/>
    <property type="match status" value="1"/>
</dbReference>
<dbReference type="SMART" id="SM00338">
    <property type="entry name" value="BRLZ"/>
    <property type="match status" value="1"/>
</dbReference>
<dbReference type="SUPFAM" id="SSF57959">
    <property type="entry name" value="Leucine zipper domain"/>
    <property type="match status" value="1"/>
</dbReference>
<dbReference type="PROSITE" id="PS50217">
    <property type="entry name" value="BZIP"/>
    <property type="match status" value="1"/>
</dbReference>
<dbReference type="PROSITE" id="PS00036">
    <property type="entry name" value="BZIP_BASIC"/>
    <property type="match status" value="1"/>
</dbReference>
<comment type="function">
    <text evidence="3">Probable transcription factor involved in somatic embryogenesis. Acts as a positive regulator of BHLH109.</text>
</comment>
<comment type="subunit">
    <text evidence="2">Forms heterodimers with BZIP34 and BZIP61.</text>
</comment>
<comment type="interaction">
    <interactant intactId="EBI-1237855">
        <id>Q9FMC2</id>
    </interactant>
    <interactant intactId="EBI-15193025">
        <id>Q9LXU1</id>
        <label>NOT9B</label>
    </interactant>
    <organismsDiffer>false</organismsDiffer>
    <experiments>3</experiments>
</comment>
<comment type="interaction">
    <interactant intactId="EBI-1237855">
        <id>Q9FMC2</id>
    </interactant>
    <interactant intactId="EBI-15192731">
        <id>A1YKT1</id>
        <label>TCP18</label>
    </interactant>
    <organismsDiffer>false</organismsDiffer>
    <experiments>3</experiments>
</comment>
<comment type="interaction">
    <interactant intactId="EBI-1237855">
        <id>Q9FMC2</id>
    </interactant>
    <interactant intactId="EBI-15192325">
        <id>Q8LPR5</id>
        <label>TCP4</label>
    </interactant>
    <organismsDiffer>false</organismsDiffer>
    <experiments>3</experiments>
</comment>
<comment type="interaction">
    <interactant intactId="EBI-1237855">
        <id>Q9FMC2</id>
    </interactant>
    <interactant intactId="EBI-1545233">
        <id>Q8GV05</id>
        <label>TRY</label>
    </interactant>
    <organismsDiffer>false</organismsDiffer>
    <experiments>3</experiments>
</comment>
<comment type="subcellular location">
    <subcellularLocation>
        <location evidence="1">Nucleus</location>
    </subcellularLocation>
</comment>
<accession>Q9FMC2</accession>
<accession>Q84WS3</accession>
<proteinExistence type="evidence at protein level"/>
<sequence length="165" mass="19264">MQPSTNIFSLHGCPPSYLSHIPTSSPFCGQNPNPFFSFETGVNTSQFMSLISSNNSTSDEAEENHKEIINERKQKRKISNRESARRSRMRKQRQVDELWSQVMWLRDENHQLLRKLNCVLESQEKVIEENVQLKEETTELKQMISDMQLQNQSPFSCIRDDDDVV</sequence>